<keyword id="KW-0325">Glycoprotein</keyword>
<keyword id="KW-0472">Membrane</keyword>
<keyword id="KW-1185">Reference proteome</keyword>
<keyword id="KW-0762">Sugar transport</keyword>
<keyword id="KW-0812">Transmembrane</keyword>
<keyword id="KW-1133">Transmembrane helix</keyword>
<keyword id="KW-0813">Transport</keyword>
<organism>
    <name type="scientific">Neurospora crassa (strain ATCC 24698 / 74-OR23-1A / CBS 708.71 / DSM 1257 / FGSC 987)</name>
    <dbReference type="NCBI Taxonomy" id="367110"/>
    <lineage>
        <taxon>Eukaryota</taxon>
        <taxon>Fungi</taxon>
        <taxon>Dikarya</taxon>
        <taxon>Ascomycota</taxon>
        <taxon>Pezizomycotina</taxon>
        <taxon>Sordariomycetes</taxon>
        <taxon>Sordariomycetidae</taxon>
        <taxon>Sordariales</taxon>
        <taxon>Sordariaceae</taxon>
        <taxon>Neurospora</taxon>
    </lineage>
</organism>
<name>RCO3_NEUCR</name>
<gene>
    <name type="primary">rco-3</name>
    <name type="ORF">B5K2.040</name>
    <name type="ORF">NCU02582</name>
</gene>
<proteinExistence type="inferred from homology"/>
<protein>
    <recommendedName>
        <fullName>Probable glucose transporter rco-3</fullName>
    </recommendedName>
</protein>
<comment type="function">
    <text>Probable glucose transporter. Involved in sugar transport, carbon catabolite repression, and initiation of conidiophore development.</text>
</comment>
<comment type="subcellular location">
    <subcellularLocation>
        <location>Membrane</location>
        <topology>Multi-pass membrane protein</topology>
    </subcellularLocation>
</comment>
<comment type="similarity">
    <text evidence="3">Belongs to the major facilitator superfamily. Sugar transporter (TC 2.A.1.1) family.</text>
</comment>
<feature type="chain" id="PRO_0000050421" description="Probable glucose transporter rco-3">
    <location>
        <begin position="1"/>
        <end position="594"/>
    </location>
</feature>
<feature type="topological domain" description="Cytoplasmic" evidence="1">
    <location>
        <begin position="1"/>
        <end position="13"/>
    </location>
</feature>
<feature type="transmembrane region" description="Helical; Name=1" evidence="1">
    <location>
        <begin position="14"/>
        <end position="34"/>
    </location>
</feature>
<feature type="topological domain" description="Extracellular" evidence="1">
    <location>
        <begin position="35"/>
        <end position="73"/>
    </location>
</feature>
<feature type="transmembrane region" description="Helical; Name=2" evidence="1">
    <location>
        <begin position="74"/>
        <end position="94"/>
    </location>
</feature>
<feature type="topological domain" description="Cytoplasmic" evidence="1">
    <location>
        <begin position="95"/>
        <end position="103"/>
    </location>
</feature>
<feature type="transmembrane region" description="Helical; Name=3" evidence="1">
    <location>
        <begin position="104"/>
        <end position="124"/>
    </location>
</feature>
<feature type="topological domain" description="Extracellular" evidence="1">
    <location>
        <position position="125"/>
    </location>
</feature>
<feature type="transmembrane region" description="Helical; Name=4" evidence="1">
    <location>
        <begin position="126"/>
        <end position="146"/>
    </location>
</feature>
<feature type="topological domain" description="Cytoplasmic" evidence="1">
    <location>
        <begin position="147"/>
        <end position="159"/>
    </location>
</feature>
<feature type="transmembrane region" description="Helical; Name=5" evidence="1">
    <location>
        <begin position="160"/>
        <end position="180"/>
    </location>
</feature>
<feature type="topological domain" description="Extracellular" evidence="1">
    <location>
        <begin position="181"/>
        <end position="193"/>
    </location>
</feature>
<feature type="transmembrane region" description="Helical; Name=6" evidence="1">
    <location>
        <begin position="194"/>
        <end position="214"/>
    </location>
</feature>
<feature type="topological domain" description="Cytoplasmic" evidence="1">
    <location>
        <begin position="215"/>
        <end position="293"/>
    </location>
</feature>
<feature type="transmembrane region" description="Helical; Name=7" evidence="1">
    <location>
        <begin position="294"/>
        <end position="314"/>
    </location>
</feature>
<feature type="topological domain" description="Extracellular" evidence="1">
    <location>
        <begin position="315"/>
        <end position="318"/>
    </location>
</feature>
<feature type="transmembrane region" description="Helical; Name=8" evidence="1">
    <location>
        <begin position="319"/>
        <end position="339"/>
    </location>
</feature>
<feature type="topological domain" description="Cytoplasmic" evidence="1">
    <location>
        <begin position="340"/>
        <end position="345"/>
    </location>
</feature>
<feature type="transmembrane region" description="Helical; Name=9" evidence="1">
    <location>
        <begin position="346"/>
        <end position="366"/>
    </location>
</feature>
<feature type="topological domain" description="Extracellular" evidence="1">
    <location>
        <begin position="367"/>
        <end position="378"/>
    </location>
</feature>
<feature type="transmembrane region" description="Helical; Name=10" evidence="1">
    <location>
        <begin position="379"/>
        <end position="403"/>
    </location>
</feature>
<feature type="topological domain" description="Cytoplasmic" evidence="1">
    <location>
        <begin position="404"/>
        <end position="415"/>
    </location>
</feature>
<feature type="transmembrane region" description="Helical; Name=11" evidence="1">
    <location>
        <begin position="416"/>
        <end position="436"/>
    </location>
</feature>
<feature type="topological domain" description="Extracellular" evidence="1">
    <location>
        <begin position="437"/>
        <end position="454"/>
    </location>
</feature>
<feature type="transmembrane region" description="Helical; Name=12" evidence="1">
    <location>
        <begin position="455"/>
        <end position="475"/>
    </location>
</feature>
<feature type="topological domain" description="Cytoplasmic" evidence="1">
    <location>
        <begin position="476"/>
        <end position="594"/>
    </location>
</feature>
<feature type="region of interest" description="Disordered" evidence="2">
    <location>
        <begin position="512"/>
        <end position="594"/>
    </location>
</feature>
<feature type="compositionally biased region" description="Low complexity" evidence="2">
    <location>
        <begin position="524"/>
        <end position="576"/>
    </location>
</feature>
<feature type="glycosylation site" description="N-linked (GlcNAc...) asparagine" evidence="1">
    <location>
        <position position="372"/>
    </location>
</feature>
<feature type="sequence conflict" description="In Ref. 1; AAA99806." evidence="3" ref="1">
    <original>F</original>
    <variation>L</variation>
    <location>
        <position position="317"/>
    </location>
</feature>
<feature type="sequence conflict" description="In Ref. 1; AAA99806." evidence="3" ref="1">
    <original>Q</original>
    <variation>H</variation>
    <location>
        <position position="376"/>
    </location>
</feature>
<sequence>MAIFAMGWQKPDNVAGSSAPAIMVGLFVATGGLLLGYDTGTINGILAMKSFKDHFSTGYIDGNGQPGIYPKESALIVAMLSAGTAIGALLAAPLGDHYGRRRSLIGAIGIFVIGAILQVCAYNIDLLVAGRTVAGVGIGIVSVLVPLYQSEMAPKWIRGTLVCTYQLSITMGLLAAAVVNILTYKLKTAAAYRVPIGLQLTWACVLALGLTVLPETPRYLIKRGDKNAAALSLSRLRRLDITHPALVEELAEIEANHQYEMALGPDSYKDILFGEPHLGRRTFTGCCLQMLQQLTGVNFIMYYGTTFFNNAGVGNPFKISLIMQVINTASTIPGLFVVESWGRRRLLMVGAIGMAICQLLIAAFATASGSNNLSAQNKVLITFVAIYIFFFAASWGPVVWVVTSEIYPLKVRAKSMSITTASNWFLNFGIAYGTPYMQTNSAASDESSIDLGSKVFFVWGAFCIVAVGFVWCMVYETSKISLEQIDEMYERVDHAWHSRRFEPSWSFQEMRDLGFSDGGIPPTQQLQQQPQQPQQQQQQHHQQQQHQLQVDLQQSQSRTSNSSTSQTDTGGSNNTGASQDDKLVASLGNIDLSY</sequence>
<evidence type="ECO:0000255" key="1"/>
<evidence type="ECO:0000256" key="2">
    <source>
        <dbReference type="SAM" id="MobiDB-lite"/>
    </source>
</evidence>
<evidence type="ECO:0000305" key="3"/>
<dbReference type="EMBL" id="U54768">
    <property type="protein sequence ID" value="AAA99806.1"/>
    <property type="molecule type" value="Genomic_DNA"/>
</dbReference>
<dbReference type="EMBL" id="BX842632">
    <property type="protein sequence ID" value="CAE76420.1"/>
    <property type="molecule type" value="Genomic_DNA"/>
</dbReference>
<dbReference type="EMBL" id="CM002236">
    <property type="protein sequence ID" value="EAA36477.1"/>
    <property type="molecule type" value="Genomic_DNA"/>
</dbReference>
<dbReference type="RefSeq" id="XP_965713.1">
    <property type="nucleotide sequence ID" value="XM_960620.2"/>
</dbReference>
<dbReference type="SMR" id="Q92253"/>
<dbReference type="FunCoup" id="Q92253">
    <property type="interactions" value="178"/>
</dbReference>
<dbReference type="STRING" id="367110.Q92253"/>
<dbReference type="GlyCosmos" id="Q92253">
    <property type="glycosylation" value="1 site, No reported glycans"/>
</dbReference>
<dbReference type="PaxDb" id="5141-EFNCRP00000002137"/>
<dbReference type="EnsemblFungi" id="EAA36477">
    <property type="protein sequence ID" value="EAA36477"/>
    <property type="gene ID" value="NCU02582"/>
</dbReference>
<dbReference type="GeneID" id="3881863"/>
<dbReference type="KEGG" id="ncr:NCU02582"/>
<dbReference type="VEuPathDB" id="FungiDB:NCU02582"/>
<dbReference type="HOGENOM" id="CLU_001265_30_1_1"/>
<dbReference type="InParanoid" id="Q92253"/>
<dbReference type="OrthoDB" id="6612291at2759"/>
<dbReference type="Proteomes" id="UP000001805">
    <property type="component" value="Chromosome 1, Linkage Group I"/>
</dbReference>
<dbReference type="GO" id="GO:0016020">
    <property type="term" value="C:membrane"/>
    <property type="evidence" value="ECO:0000318"/>
    <property type="project" value="GO_Central"/>
</dbReference>
<dbReference type="GO" id="GO:0005351">
    <property type="term" value="F:carbohydrate:proton symporter activity"/>
    <property type="evidence" value="ECO:0000318"/>
    <property type="project" value="GO_Central"/>
</dbReference>
<dbReference type="GO" id="GO:0008643">
    <property type="term" value="P:carbohydrate transport"/>
    <property type="evidence" value="ECO:0000318"/>
    <property type="project" value="GO_Central"/>
</dbReference>
<dbReference type="CDD" id="cd17356">
    <property type="entry name" value="MFS_HXT"/>
    <property type="match status" value="1"/>
</dbReference>
<dbReference type="FunFam" id="1.20.1250.20:FF:000115">
    <property type="entry name" value="High-affinity glucose transporter"/>
    <property type="match status" value="1"/>
</dbReference>
<dbReference type="Gene3D" id="1.20.1250.20">
    <property type="entry name" value="MFS general substrate transporter like domains"/>
    <property type="match status" value="1"/>
</dbReference>
<dbReference type="InterPro" id="IPR020846">
    <property type="entry name" value="MFS_dom"/>
</dbReference>
<dbReference type="InterPro" id="IPR005828">
    <property type="entry name" value="MFS_sugar_transport-like"/>
</dbReference>
<dbReference type="InterPro" id="IPR050360">
    <property type="entry name" value="MFS_Sugar_Transporters"/>
</dbReference>
<dbReference type="InterPro" id="IPR036259">
    <property type="entry name" value="MFS_trans_sf"/>
</dbReference>
<dbReference type="InterPro" id="IPR003663">
    <property type="entry name" value="Sugar/inositol_transpt"/>
</dbReference>
<dbReference type="InterPro" id="IPR005829">
    <property type="entry name" value="Sugar_transporter_CS"/>
</dbReference>
<dbReference type="NCBIfam" id="TIGR00879">
    <property type="entry name" value="SP"/>
    <property type="match status" value="1"/>
</dbReference>
<dbReference type="PANTHER" id="PTHR48022:SF40">
    <property type="entry name" value="MAJOR FACILITATOR SUPERFAMILY (MFS) PROFILE DOMAIN-CONTAINING PROTEIN"/>
    <property type="match status" value="1"/>
</dbReference>
<dbReference type="PANTHER" id="PTHR48022">
    <property type="entry name" value="PLASTIDIC GLUCOSE TRANSPORTER 4"/>
    <property type="match status" value="1"/>
</dbReference>
<dbReference type="Pfam" id="PF00083">
    <property type="entry name" value="Sugar_tr"/>
    <property type="match status" value="1"/>
</dbReference>
<dbReference type="PRINTS" id="PR00171">
    <property type="entry name" value="SUGRTRNSPORT"/>
</dbReference>
<dbReference type="SUPFAM" id="SSF103473">
    <property type="entry name" value="MFS general substrate transporter"/>
    <property type="match status" value="1"/>
</dbReference>
<dbReference type="PROSITE" id="PS50850">
    <property type="entry name" value="MFS"/>
    <property type="match status" value="1"/>
</dbReference>
<dbReference type="PROSITE" id="PS00216">
    <property type="entry name" value="SUGAR_TRANSPORT_1"/>
    <property type="match status" value="1"/>
</dbReference>
<dbReference type="PROSITE" id="PS00217">
    <property type="entry name" value="SUGAR_TRANSPORT_2"/>
    <property type="match status" value="1"/>
</dbReference>
<reference key="1">
    <citation type="journal article" date="1997" name="Genetics">
        <title>rco-3, a gene involved in glucose transport and conidiation in Neurospora crassa.</title>
        <authorList>
            <person name="Madi L."/>
            <person name="McBride S.A."/>
            <person name="Bailey L.A."/>
            <person name="Ebbole D.J."/>
        </authorList>
    </citation>
    <scope>NUCLEOTIDE SEQUENCE [GENOMIC DNA]</scope>
    <source>
        <strain>ATCC 24698 / 74-OR23-1A / CBS 708.71 / DSM 1257 / FGSC 987</strain>
    </source>
</reference>
<reference key="2">
    <citation type="journal article" date="2003" name="Nucleic Acids Res.">
        <title>What's in the genome of a filamentous fungus? Analysis of the Neurospora genome sequence.</title>
        <authorList>
            <person name="Mannhaupt G."/>
            <person name="Montrone C."/>
            <person name="Haase D."/>
            <person name="Mewes H.-W."/>
            <person name="Aign V."/>
            <person name="Hoheisel J.D."/>
            <person name="Fartmann B."/>
            <person name="Nyakatura G."/>
            <person name="Kempken F."/>
            <person name="Maier J."/>
            <person name="Schulte U."/>
        </authorList>
    </citation>
    <scope>NUCLEOTIDE SEQUENCE [LARGE SCALE GENOMIC DNA]</scope>
    <source>
        <strain>ATCC 24698 / 74-OR23-1A / CBS 708.71 / DSM 1257 / FGSC 987</strain>
    </source>
</reference>
<reference key="3">
    <citation type="journal article" date="2003" name="Nature">
        <title>The genome sequence of the filamentous fungus Neurospora crassa.</title>
        <authorList>
            <person name="Galagan J.E."/>
            <person name="Calvo S.E."/>
            <person name="Borkovich K.A."/>
            <person name="Selker E.U."/>
            <person name="Read N.D."/>
            <person name="Jaffe D.B."/>
            <person name="FitzHugh W."/>
            <person name="Ma L.-J."/>
            <person name="Smirnov S."/>
            <person name="Purcell S."/>
            <person name="Rehman B."/>
            <person name="Elkins T."/>
            <person name="Engels R."/>
            <person name="Wang S."/>
            <person name="Nielsen C.B."/>
            <person name="Butler J."/>
            <person name="Endrizzi M."/>
            <person name="Qui D."/>
            <person name="Ianakiev P."/>
            <person name="Bell-Pedersen D."/>
            <person name="Nelson M.A."/>
            <person name="Werner-Washburne M."/>
            <person name="Selitrennikoff C.P."/>
            <person name="Kinsey J.A."/>
            <person name="Braun E.L."/>
            <person name="Zelter A."/>
            <person name="Schulte U."/>
            <person name="Kothe G.O."/>
            <person name="Jedd G."/>
            <person name="Mewes H.-W."/>
            <person name="Staben C."/>
            <person name="Marcotte E."/>
            <person name="Greenberg D."/>
            <person name="Roy A."/>
            <person name="Foley K."/>
            <person name="Naylor J."/>
            <person name="Stange-Thomann N."/>
            <person name="Barrett R."/>
            <person name="Gnerre S."/>
            <person name="Kamal M."/>
            <person name="Kamvysselis M."/>
            <person name="Mauceli E.W."/>
            <person name="Bielke C."/>
            <person name="Rudd S."/>
            <person name="Frishman D."/>
            <person name="Krystofova S."/>
            <person name="Rasmussen C."/>
            <person name="Metzenberg R.L."/>
            <person name="Perkins D.D."/>
            <person name="Kroken S."/>
            <person name="Cogoni C."/>
            <person name="Macino G."/>
            <person name="Catcheside D.E.A."/>
            <person name="Li W."/>
            <person name="Pratt R.J."/>
            <person name="Osmani S.A."/>
            <person name="DeSouza C.P.C."/>
            <person name="Glass N.L."/>
            <person name="Orbach M.J."/>
            <person name="Berglund J.A."/>
            <person name="Voelker R."/>
            <person name="Yarden O."/>
            <person name="Plamann M."/>
            <person name="Seiler S."/>
            <person name="Dunlap J.C."/>
            <person name="Radford A."/>
            <person name="Aramayo R."/>
            <person name="Natvig D.O."/>
            <person name="Alex L.A."/>
            <person name="Mannhaupt G."/>
            <person name="Ebbole D.J."/>
            <person name="Freitag M."/>
            <person name="Paulsen I."/>
            <person name="Sachs M.S."/>
            <person name="Lander E.S."/>
            <person name="Nusbaum C."/>
            <person name="Birren B.W."/>
        </authorList>
    </citation>
    <scope>NUCLEOTIDE SEQUENCE [LARGE SCALE GENOMIC DNA]</scope>
    <source>
        <strain>ATCC 24698 / 74-OR23-1A / CBS 708.71 / DSM 1257 / FGSC 987</strain>
    </source>
</reference>
<accession>Q92253</accession>
<accession>Q7RVM6</accession>